<organism>
    <name type="scientific">Homo sapiens</name>
    <name type="common">Human</name>
    <dbReference type="NCBI Taxonomy" id="9606"/>
    <lineage>
        <taxon>Eukaryota</taxon>
        <taxon>Metazoa</taxon>
        <taxon>Chordata</taxon>
        <taxon>Craniata</taxon>
        <taxon>Vertebrata</taxon>
        <taxon>Euteleostomi</taxon>
        <taxon>Mammalia</taxon>
        <taxon>Eutheria</taxon>
        <taxon>Euarchontoglires</taxon>
        <taxon>Primates</taxon>
        <taxon>Haplorrhini</taxon>
        <taxon>Catarrhini</taxon>
        <taxon>Hominidae</taxon>
        <taxon>Homo</taxon>
    </lineage>
</organism>
<protein>
    <recommendedName>
        <fullName>Period circadian protein homolog 1</fullName>
        <shortName>hPER1</shortName>
    </recommendedName>
    <alternativeName>
        <fullName>Circadian clock protein PERIOD 1</fullName>
    </alternativeName>
    <alternativeName>
        <fullName>Circadian pacemaker protein Rigui</fullName>
    </alternativeName>
</protein>
<feature type="chain" id="PRO_0000162627" description="Period circadian protein homolog 1">
    <location>
        <begin position="1"/>
        <end position="1290"/>
    </location>
</feature>
<feature type="domain" description="PAS 1" evidence="6">
    <location>
        <begin position="208"/>
        <end position="275"/>
    </location>
</feature>
<feature type="domain" description="PAS 2" evidence="6">
    <location>
        <begin position="348"/>
        <end position="414"/>
    </location>
</feature>
<feature type="domain" description="PAC">
    <location>
        <begin position="422"/>
        <end position="465"/>
    </location>
</feature>
<feature type="region of interest" description="Interaction with BTRC" evidence="12">
    <location>
        <begin position="1"/>
        <end position="151"/>
    </location>
</feature>
<feature type="region of interest" description="Disordered" evidence="7">
    <location>
        <begin position="1"/>
        <end position="134"/>
    </location>
</feature>
<feature type="region of interest" description="Disordered" evidence="7">
    <location>
        <begin position="508"/>
        <end position="544"/>
    </location>
</feature>
<feature type="region of interest" description="Required for phosphorylation by CSNK1E" evidence="1">
    <location>
        <begin position="596"/>
        <end position="815"/>
    </location>
</feature>
<feature type="region of interest" description="Disordered" evidence="7">
    <location>
        <begin position="646"/>
        <end position="698"/>
    </location>
</feature>
<feature type="region of interest" description="Disordered" evidence="7">
    <location>
        <begin position="749"/>
        <end position="772"/>
    </location>
</feature>
<feature type="region of interest" description="Disordered" evidence="7">
    <location>
        <begin position="805"/>
        <end position="874"/>
    </location>
</feature>
<feature type="region of interest" description="Disordered" evidence="7">
    <location>
        <begin position="938"/>
        <end position="977"/>
    </location>
</feature>
<feature type="region of interest" description="Disordered" evidence="7">
    <location>
        <begin position="996"/>
        <end position="1037"/>
    </location>
</feature>
<feature type="region of interest" description="Disordered" evidence="7">
    <location>
        <begin position="1051"/>
        <end position="1098"/>
    </location>
</feature>
<feature type="region of interest" description="CRY binding domain" evidence="1">
    <location>
        <begin position="1149"/>
        <end position="1290"/>
    </location>
</feature>
<feature type="region of interest" description="Disordered" evidence="7">
    <location>
        <begin position="1207"/>
        <end position="1290"/>
    </location>
</feature>
<feature type="short sequence motif" description="Nuclear export signal 1" evidence="3">
    <location>
        <begin position="138"/>
        <end position="147"/>
    </location>
</feature>
<feature type="short sequence motif" description="Nuclear export signal 2" evidence="2">
    <location>
        <begin position="489"/>
        <end position="498"/>
    </location>
</feature>
<feature type="short sequence motif" description="Nuclear localization signal" evidence="2">
    <location>
        <begin position="827"/>
        <end position="843"/>
    </location>
</feature>
<feature type="short sequence motif" description="Nuclear export signal 3" evidence="3">
    <location>
        <begin position="982"/>
        <end position="989"/>
    </location>
</feature>
<feature type="short sequence motif" description="LXXLL">
    <location>
        <begin position="1043"/>
        <end position="1047"/>
    </location>
</feature>
<feature type="compositionally biased region" description="Pro residues" evidence="7">
    <location>
        <begin position="25"/>
        <end position="38"/>
    </location>
</feature>
<feature type="compositionally biased region" description="Low complexity" evidence="7">
    <location>
        <begin position="48"/>
        <end position="57"/>
    </location>
</feature>
<feature type="compositionally biased region" description="Low complexity" evidence="7">
    <location>
        <begin position="64"/>
        <end position="115"/>
    </location>
</feature>
<feature type="compositionally biased region" description="Polar residues" evidence="7">
    <location>
        <begin position="116"/>
        <end position="132"/>
    </location>
</feature>
<feature type="compositionally biased region" description="Low complexity" evidence="7">
    <location>
        <begin position="517"/>
        <end position="533"/>
    </location>
</feature>
<feature type="compositionally biased region" description="Low complexity" evidence="7">
    <location>
        <begin position="652"/>
        <end position="662"/>
    </location>
</feature>
<feature type="compositionally biased region" description="Pro residues" evidence="7">
    <location>
        <begin position="751"/>
        <end position="769"/>
    </location>
</feature>
<feature type="compositionally biased region" description="Basic residues" evidence="7">
    <location>
        <begin position="830"/>
        <end position="847"/>
    </location>
</feature>
<feature type="compositionally biased region" description="Pro residues" evidence="7">
    <location>
        <begin position="860"/>
        <end position="874"/>
    </location>
</feature>
<feature type="compositionally biased region" description="Low complexity" evidence="7">
    <location>
        <begin position="950"/>
        <end position="961"/>
    </location>
</feature>
<feature type="compositionally biased region" description="Low complexity" evidence="7">
    <location>
        <begin position="1051"/>
        <end position="1062"/>
    </location>
</feature>
<feature type="compositionally biased region" description="Gly residues" evidence="7">
    <location>
        <begin position="1063"/>
        <end position="1077"/>
    </location>
</feature>
<feature type="compositionally biased region" description="Low complexity" evidence="7">
    <location>
        <begin position="1078"/>
        <end position="1095"/>
    </location>
</feature>
<feature type="compositionally biased region" description="Gly residues" evidence="7">
    <location>
        <begin position="1236"/>
        <end position="1248"/>
    </location>
</feature>
<feature type="modified residue" description="Phosphothreonine; by CSNK1E" evidence="5">
    <location>
        <position position="121"/>
    </location>
</feature>
<feature type="modified residue" description="Phosphoserine; by CSNK1E" evidence="5">
    <location>
        <position position="122"/>
    </location>
</feature>
<feature type="modified residue" description="Phosphoserine; by CSNK1E" evidence="5">
    <location>
        <position position="126"/>
    </location>
</feature>
<feature type="modified residue" description="Phosphoserine" evidence="2">
    <location>
        <position position="661"/>
    </location>
</feature>
<feature type="modified residue" description="Phosphoserine" evidence="2">
    <location>
        <position position="663"/>
    </location>
</feature>
<feature type="modified residue" description="Phosphoserine" evidence="25 27 28">
    <location>
        <position position="704"/>
    </location>
</feature>
<feature type="modified residue" description="Phosphoserine" evidence="25 26 28">
    <location>
        <position position="815"/>
    </location>
</feature>
<feature type="modified residue" description="Phosphoserine" evidence="24">
    <location>
        <position position="979"/>
    </location>
</feature>
<feature type="modified residue" description="Phosphoserine" evidence="24">
    <location>
        <position position="980"/>
    </location>
</feature>
<feature type="splice variant" id="VSP_056205" description="In isoform 2." evidence="22">
    <original>MSGPLEGADGGGDPRPGESFCPGGVPSPGPPQ</original>
    <variation>MLEVLEEIWSVRARRA</variation>
    <location>
        <begin position="1"/>
        <end position="32"/>
    </location>
</feature>
<feature type="splice variant" id="VSP_056206" description="In isoform 2." evidence="22">
    <original>CHHGPAPPSRRHHCRSKAKRSRHHQNPRAEAPCYVSHPSPVPPSTPWPTPPATT</original>
    <variation>SHLGPPGACPLPSLGLDCWGVGLKGGVSAPGTQAGVASTTRPCLGTGPSLASPH</variation>
    <location>
        <begin position="822"/>
        <end position="875"/>
    </location>
</feature>
<feature type="splice variant" id="VSP_056207" description="In isoform 2." evidence="22">
    <location>
        <begin position="876"/>
        <end position="1290"/>
    </location>
</feature>
<feature type="sequence variant" id="VAR_079176" description="Found in a patient with Moyamoya disease; uncertain significance; dbSNP:rs1464745710." evidence="15">
    <original>H</original>
    <variation>Q</variation>
    <location>
        <position position="422"/>
    </location>
</feature>
<feature type="sequence variant" id="VAR_036038" description="In a breast cancer sample; somatic mutation." evidence="13">
    <original>E</original>
    <variation>Q</variation>
    <location>
        <position position="696"/>
    </location>
</feature>
<feature type="sequence variant" id="VAR_047899" description="In dbSNP:rs2585405." evidence="8 9 11 17 18 20 21">
    <original>A</original>
    <variation>P</variation>
    <location>
        <position position="962"/>
    </location>
</feature>
<feature type="sequence variant" id="VAR_047900" description="In dbSNP:rs3027193.">
    <original>R</original>
    <variation>H</variation>
    <location>
        <position position="968"/>
    </location>
</feature>
<feature type="sequence variant" id="VAR_036039" description="In a breast cancer sample; somatic mutation; dbSNP:rs1323588262." evidence="13">
    <original>N</original>
    <variation>S</variation>
    <location>
        <position position="985"/>
    </location>
</feature>
<feature type="sequence variant" id="VAR_036040" description="In a colorectal cancer sample; somatic mutation; dbSNP:rs761958964." evidence="13">
    <original>S</original>
    <variation>L</variation>
    <location>
        <position position="1060"/>
    </location>
</feature>
<feature type="mutagenesis site" description="Strongly decreases interaction with BTRC and FBXW11 and inhibits degradation promoted by CSNK1E.">
    <original>TSGCSS</original>
    <variation>AAGCSA</variation>
    <location>
        <begin position="121"/>
        <end position="126"/>
    </location>
</feature>
<feature type="mutagenesis site" description="No effect on interaction with BTRC and FBXW11." evidence="12">
    <original>SEYT</original>
    <variation>AEYA</variation>
    <location>
        <begin position="210"/>
        <end position="213"/>
    </location>
</feature>
<feature type="mutagenesis site" description="No effect on interaction with BTRC and FBXW11." evidence="12">
    <original>SVVSVTSQCSFSS</original>
    <variation>AVVAVTAQCAFAA</variation>
    <location>
        <begin position="714"/>
        <end position="726"/>
    </location>
</feature>
<feature type="mutagenesis site" description="Strongly decreases interaction with BTRC and FBXW11." evidence="12">
    <original>FLSRF</original>
    <variation>ALSRA</variation>
    <location>
        <begin position="794"/>
        <end position="798"/>
    </location>
</feature>
<keyword id="KW-0025">Alternative splicing</keyword>
<keyword id="KW-0090">Biological rhythms</keyword>
<keyword id="KW-0963">Cytoplasm</keyword>
<keyword id="KW-0539">Nucleus</keyword>
<keyword id="KW-0597">Phosphoprotein</keyword>
<keyword id="KW-1267">Proteomics identification</keyword>
<keyword id="KW-1185">Reference proteome</keyword>
<keyword id="KW-0677">Repeat</keyword>
<keyword id="KW-0804">Transcription</keyword>
<keyword id="KW-0805">Transcription regulation</keyword>
<keyword id="KW-0832">Ubl conjugation</keyword>
<gene>
    <name type="primary">PER1</name>
    <name type="synonym">KIAA0482</name>
    <name type="synonym">PER</name>
    <name type="synonym">RIGUI</name>
</gene>
<name>PER1_HUMAN</name>
<accession>O15534</accession>
<accession>B2RPA8</accession>
<accession>B4DI49</accession>
<accession>D3DTR3</accession>
<dbReference type="EMBL" id="AF022991">
    <property type="protein sequence ID" value="AAC51765.1"/>
    <property type="molecule type" value="mRNA"/>
</dbReference>
<dbReference type="EMBL" id="AB002107">
    <property type="protein sequence ID" value="BAA22633.1"/>
    <property type="molecule type" value="mRNA"/>
</dbReference>
<dbReference type="EMBL" id="AF102137">
    <property type="protein sequence ID" value="AAF15544.1"/>
    <property type="molecule type" value="Genomic_DNA"/>
</dbReference>
<dbReference type="EMBL" id="AB030817">
    <property type="protein sequence ID" value="BAA94085.1"/>
    <property type="molecule type" value="Genomic_DNA"/>
</dbReference>
<dbReference type="EMBL" id="AB088477">
    <property type="protein sequence ID" value="BAC06326.2"/>
    <property type="status" value="ALT_INIT"/>
    <property type="molecule type" value="mRNA"/>
</dbReference>
<dbReference type="EMBL" id="AK295410">
    <property type="protein sequence ID" value="BAG58361.1"/>
    <property type="molecule type" value="mRNA"/>
</dbReference>
<dbReference type="EMBL" id="AC129492">
    <property type="status" value="NOT_ANNOTATED_CDS"/>
    <property type="molecule type" value="Genomic_DNA"/>
</dbReference>
<dbReference type="EMBL" id="CH471108">
    <property type="protein sequence ID" value="EAW90090.1"/>
    <property type="molecule type" value="Genomic_DNA"/>
</dbReference>
<dbReference type="EMBL" id="CH471108">
    <property type="protein sequence ID" value="EAW90091.1"/>
    <property type="molecule type" value="Genomic_DNA"/>
</dbReference>
<dbReference type="EMBL" id="BC137346">
    <property type="protein sequence ID" value="AAI37347.1"/>
    <property type="molecule type" value="mRNA"/>
</dbReference>
<dbReference type="CCDS" id="CCDS11131.1">
    <molecule id="O15534-1"/>
</dbReference>
<dbReference type="PIR" id="T00018">
    <property type="entry name" value="T00018"/>
</dbReference>
<dbReference type="RefSeq" id="NP_002607.2">
    <molecule id="O15534-1"/>
    <property type="nucleotide sequence ID" value="NM_002616.3"/>
</dbReference>
<dbReference type="RefSeq" id="XP_005256746.1">
    <property type="nucleotide sequence ID" value="XM_005256689.1"/>
</dbReference>
<dbReference type="SMR" id="O15534"/>
<dbReference type="BioGRID" id="111210">
    <property type="interactions" value="113"/>
</dbReference>
<dbReference type="ComplexPortal" id="CPX-3221">
    <property type="entry name" value="Cry2-Per1 complex"/>
</dbReference>
<dbReference type="ComplexPortal" id="CPX-3222">
    <property type="entry name" value="Cry1-Per1 complex"/>
</dbReference>
<dbReference type="DIP" id="DIP-56603N"/>
<dbReference type="FunCoup" id="O15534">
    <property type="interactions" value="2034"/>
</dbReference>
<dbReference type="IntAct" id="O15534">
    <property type="interactions" value="95"/>
</dbReference>
<dbReference type="MINT" id="O15534"/>
<dbReference type="STRING" id="9606.ENSP00000314420"/>
<dbReference type="GlyGen" id="O15534">
    <property type="glycosylation" value="6 sites, 1 O-linked glycan (2 sites)"/>
</dbReference>
<dbReference type="iPTMnet" id="O15534"/>
<dbReference type="PhosphoSitePlus" id="O15534"/>
<dbReference type="BioMuta" id="PER1"/>
<dbReference type="jPOST" id="O15534"/>
<dbReference type="MassIVE" id="O15534"/>
<dbReference type="PaxDb" id="9606-ENSP00000314420"/>
<dbReference type="PeptideAtlas" id="O15534"/>
<dbReference type="ProteomicsDB" id="4276"/>
<dbReference type="ProteomicsDB" id="48743">
    <molecule id="O15534-1"/>
</dbReference>
<dbReference type="Pumba" id="O15534"/>
<dbReference type="Antibodypedia" id="24542">
    <property type="antibodies" value="254 antibodies from 35 providers"/>
</dbReference>
<dbReference type="DNASU" id="5187"/>
<dbReference type="Ensembl" id="ENST00000317276.9">
    <molecule id="O15534-1"/>
    <property type="protein sequence ID" value="ENSP00000314420.4"/>
    <property type="gene ID" value="ENSG00000179094.17"/>
</dbReference>
<dbReference type="Ensembl" id="ENST00000354903.9">
    <molecule id="O15534-4"/>
    <property type="protein sequence ID" value="ENSP00000346979.5"/>
    <property type="gene ID" value="ENSG00000179094.17"/>
</dbReference>
<dbReference type="GeneID" id="5187"/>
<dbReference type="KEGG" id="hsa:5187"/>
<dbReference type="MANE-Select" id="ENST00000317276.9">
    <property type="protein sequence ID" value="ENSP00000314420.4"/>
    <property type="RefSeq nucleotide sequence ID" value="NM_002616.3"/>
    <property type="RefSeq protein sequence ID" value="NP_002607.2"/>
</dbReference>
<dbReference type="UCSC" id="uc002gkd.4">
    <molecule id="O15534-1"/>
    <property type="organism name" value="human"/>
</dbReference>
<dbReference type="AGR" id="HGNC:8845"/>
<dbReference type="CTD" id="5187"/>
<dbReference type="DisGeNET" id="5187"/>
<dbReference type="GeneCards" id="PER1"/>
<dbReference type="HGNC" id="HGNC:8845">
    <property type="gene designation" value="PER1"/>
</dbReference>
<dbReference type="HPA" id="ENSG00000179094">
    <property type="expression patterns" value="Low tissue specificity"/>
</dbReference>
<dbReference type="MalaCards" id="PER1"/>
<dbReference type="MIM" id="602260">
    <property type="type" value="gene"/>
</dbReference>
<dbReference type="neXtProt" id="NX_O15534"/>
<dbReference type="OpenTargets" id="ENSG00000179094"/>
<dbReference type="PharmGKB" id="PA33184"/>
<dbReference type="VEuPathDB" id="HostDB:ENSG00000179094"/>
<dbReference type="eggNOG" id="KOG3753">
    <property type="taxonomic scope" value="Eukaryota"/>
</dbReference>
<dbReference type="GeneTree" id="ENSGT00940000159217"/>
<dbReference type="HOGENOM" id="CLU_006667_0_0_1"/>
<dbReference type="InParanoid" id="O15534"/>
<dbReference type="OMA" id="GCTGCKC"/>
<dbReference type="OrthoDB" id="7788983at2759"/>
<dbReference type="PAN-GO" id="O15534">
    <property type="GO annotations" value="7 GO annotations based on evolutionary models"/>
</dbReference>
<dbReference type="PhylomeDB" id="O15534"/>
<dbReference type="TreeFam" id="TF318445"/>
<dbReference type="PathwayCommons" id="O15534"/>
<dbReference type="Reactome" id="R-HSA-400253">
    <property type="pathway name" value="Circadian Clock"/>
</dbReference>
<dbReference type="SignaLink" id="O15534"/>
<dbReference type="SIGNOR" id="O15534"/>
<dbReference type="BioGRID-ORCS" id="5187">
    <property type="hits" value="13 hits in 1161 CRISPR screens"/>
</dbReference>
<dbReference type="ChiTaRS" id="PER1">
    <property type="organism name" value="human"/>
</dbReference>
<dbReference type="GeneWiki" id="PER1"/>
<dbReference type="GenomeRNAi" id="5187"/>
<dbReference type="Pharos" id="O15534">
    <property type="development level" value="Tbio"/>
</dbReference>
<dbReference type="PRO" id="PR:O15534"/>
<dbReference type="Proteomes" id="UP000005640">
    <property type="component" value="Chromosome 17"/>
</dbReference>
<dbReference type="RNAct" id="O15534">
    <property type="molecule type" value="protein"/>
</dbReference>
<dbReference type="Bgee" id="ENSG00000179094">
    <property type="expression patterns" value="Expressed in mucosa of stomach and 206 other cell types or tissues"/>
</dbReference>
<dbReference type="ExpressionAtlas" id="O15534">
    <property type="expression patterns" value="baseline and differential"/>
</dbReference>
<dbReference type="GO" id="GO:0005737">
    <property type="term" value="C:cytoplasm"/>
    <property type="evidence" value="ECO:0000314"/>
    <property type="project" value="UniProtKB"/>
</dbReference>
<dbReference type="GO" id="GO:0005829">
    <property type="term" value="C:cytosol"/>
    <property type="evidence" value="ECO:0000314"/>
    <property type="project" value="HPA"/>
</dbReference>
<dbReference type="GO" id="GO:0005654">
    <property type="term" value="C:nucleoplasm"/>
    <property type="evidence" value="ECO:0000314"/>
    <property type="project" value="HPA"/>
</dbReference>
<dbReference type="GO" id="GO:0005634">
    <property type="term" value="C:nucleus"/>
    <property type="evidence" value="ECO:0000318"/>
    <property type="project" value="GO_Central"/>
</dbReference>
<dbReference type="GO" id="GO:0031490">
    <property type="term" value="F:chromatin DNA binding"/>
    <property type="evidence" value="ECO:0000250"/>
    <property type="project" value="UniProtKB"/>
</dbReference>
<dbReference type="GO" id="GO:0140297">
    <property type="term" value="F:DNA-binding transcription factor binding"/>
    <property type="evidence" value="ECO:0007669"/>
    <property type="project" value="Ensembl"/>
</dbReference>
<dbReference type="GO" id="GO:0070888">
    <property type="term" value="F:E-box binding"/>
    <property type="evidence" value="ECO:0000314"/>
    <property type="project" value="BHF-UCL"/>
</dbReference>
<dbReference type="GO" id="GO:0019900">
    <property type="term" value="F:kinase binding"/>
    <property type="evidence" value="ECO:0000353"/>
    <property type="project" value="UniProtKB"/>
</dbReference>
<dbReference type="GO" id="GO:0000978">
    <property type="term" value="F:RNA polymerase II cis-regulatory region sequence-specific DNA binding"/>
    <property type="evidence" value="ECO:0000314"/>
    <property type="project" value="BHF-UCL"/>
</dbReference>
<dbReference type="GO" id="GO:0000976">
    <property type="term" value="F:transcription cis-regulatory region binding"/>
    <property type="evidence" value="ECO:0000318"/>
    <property type="project" value="GO_Central"/>
</dbReference>
<dbReference type="GO" id="GO:0001222">
    <property type="term" value="F:transcription corepressor binding"/>
    <property type="evidence" value="ECO:0000318"/>
    <property type="project" value="GO_Central"/>
</dbReference>
<dbReference type="GO" id="GO:0031625">
    <property type="term" value="F:ubiquitin protein ligase binding"/>
    <property type="evidence" value="ECO:0000353"/>
    <property type="project" value="UniProtKB"/>
</dbReference>
<dbReference type="GO" id="GO:0006338">
    <property type="term" value="P:chromatin remodeling"/>
    <property type="evidence" value="ECO:0000250"/>
    <property type="project" value="UniProtKB"/>
</dbReference>
<dbReference type="GO" id="GO:0032922">
    <property type="term" value="P:circadian regulation of gene expression"/>
    <property type="evidence" value="ECO:0000314"/>
    <property type="project" value="UniProtKB"/>
</dbReference>
<dbReference type="GO" id="GO:0007623">
    <property type="term" value="P:circadian rhythm"/>
    <property type="evidence" value="ECO:0000270"/>
    <property type="project" value="UniProtKB"/>
</dbReference>
<dbReference type="GO" id="GO:0009649">
    <property type="term" value="P:entrainment of circadian clock"/>
    <property type="evidence" value="ECO:0000304"/>
    <property type="project" value="ProtInc"/>
</dbReference>
<dbReference type="GO" id="GO:0043153">
    <property type="term" value="P:entrainment of circadian clock by photoperiod"/>
    <property type="evidence" value="ECO:0000250"/>
    <property type="project" value="UniProtKB"/>
</dbReference>
<dbReference type="GO" id="GO:0043124">
    <property type="term" value="P:negative regulation of canonical NF-kappaB signal transduction"/>
    <property type="evidence" value="ECO:0000250"/>
    <property type="project" value="UniProtKB"/>
</dbReference>
<dbReference type="GO" id="GO:0045892">
    <property type="term" value="P:negative regulation of DNA-templated transcription"/>
    <property type="evidence" value="ECO:0000250"/>
    <property type="project" value="UniProtKB"/>
</dbReference>
<dbReference type="GO" id="GO:0046329">
    <property type="term" value="P:negative regulation of JNK cascade"/>
    <property type="evidence" value="ECO:0000250"/>
    <property type="project" value="UniProtKB"/>
</dbReference>
<dbReference type="GO" id="GO:2000323">
    <property type="term" value="P:negative regulation of nuclear receptor-mediated glucocorticoid signaling pathway"/>
    <property type="evidence" value="ECO:0000250"/>
    <property type="project" value="UniProtKB"/>
</dbReference>
<dbReference type="GO" id="GO:0000122">
    <property type="term" value="P:negative regulation of transcription by RNA polymerase II"/>
    <property type="evidence" value="ECO:0000250"/>
    <property type="project" value="BHF-UCL"/>
</dbReference>
<dbReference type="GO" id="GO:0045944">
    <property type="term" value="P:positive regulation of transcription by RNA polymerase II"/>
    <property type="evidence" value="ECO:0000250"/>
    <property type="project" value="UniProtKB"/>
</dbReference>
<dbReference type="GO" id="GO:0010608">
    <property type="term" value="P:post-transcriptional regulation of gene expression"/>
    <property type="evidence" value="ECO:0000250"/>
    <property type="project" value="UniProtKB"/>
</dbReference>
<dbReference type="GO" id="GO:0042752">
    <property type="term" value="P:regulation of circadian rhythm"/>
    <property type="evidence" value="ECO:0000250"/>
    <property type="project" value="UniProtKB"/>
</dbReference>
<dbReference type="GO" id="GO:1900015">
    <property type="term" value="P:regulation of cytokine production involved in inflammatory response"/>
    <property type="evidence" value="ECO:0000250"/>
    <property type="project" value="UniProtKB"/>
</dbReference>
<dbReference type="GO" id="GO:0042634">
    <property type="term" value="P:regulation of hair cycle"/>
    <property type="evidence" value="ECO:0000315"/>
    <property type="project" value="UniProtKB"/>
</dbReference>
<dbReference type="GO" id="GO:1900744">
    <property type="term" value="P:regulation of p38MAPK cascade"/>
    <property type="evidence" value="ECO:0000250"/>
    <property type="project" value="UniProtKB"/>
</dbReference>
<dbReference type="GO" id="GO:0002028">
    <property type="term" value="P:regulation of sodium ion transport"/>
    <property type="evidence" value="ECO:0000250"/>
    <property type="project" value="UniProtKB"/>
</dbReference>
<dbReference type="GO" id="GO:0051591">
    <property type="term" value="P:response to cAMP"/>
    <property type="evidence" value="ECO:0007669"/>
    <property type="project" value="Ensembl"/>
</dbReference>
<dbReference type="CDD" id="cd00130">
    <property type="entry name" value="PAS"/>
    <property type="match status" value="1"/>
</dbReference>
<dbReference type="FunFam" id="3.30.450.20:FF:000013">
    <property type="entry name" value="Period circadian protein homolog 2"/>
    <property type="match status" value="1"/>
</dbReference>
<dbReference type="FunFam" id="3.30.450.20:FF:000004">
    <property type="entry name" value="Period circadian protein homolog 3"/>
    <property type="match status" value="1"/>
</dbReference>
<dbReference type="Gene3D" id="3.30.450.20">
    <property type="entry name" value="PAS domain"/>
    <property type="match status" value="2"/>
</dbReference>
<dbReference type="InterPro" id="IPR000014">
    <property type="entry name" value="PAS"/>
</dbReference>
<dbReference type="InterPro" id="IPR035965">
    <property type="entry name" value="PAS-like_dom_sf"/>
</dbReference>
<dbReference type="InterPro" id="IPR013655">
    <property type="entry name" value="PAS_fold_3"/>
</dbReference>
<dbReference type="InterPro" id="IPR048814">
    <property type="entry name" value="Per1-3_PAS-A"/>
</dbReference>
<dbReference type="InterPro" id="IPR022728">
    <property type="entry name" value="Period_circadian-like_C"/>
</dbReference>
<dbReference type="InterPro" id="IPR050760">
    <property type="entry name" value="Period_circadian_regulator"/>
</dbReference>
<dbReference type="PANTHER" id="PTHR11269">
    <property type="entry name" value="PERIOD CIRCADIAN PROTEIN"/>
    <property type="match status" value="1"/>
</dbReference>
<dbReference type="PANTHER" id="PTHR11269:SF8">
    <property type="entry name" value="PERIOD CIRCADIAN PROTEIN HOMOLOG 1"/>
    <property type="match status" value="1"/>
</dbReference>
<dbReference type="Pfam" id="PF23170">
    <property type="entry name" value="bHLH_PER"/>
    <property type="match status" value="1"/>
</dbReference>
<dbReference type="Pfam" id="PF08447">
    <property type="entry name" value="PAS_3"/>
    <property type="match status" value="1"/>
</dbReference>
<dbReference type="Pfam" id="PF21353">
    <property type="entry name" value="Per3-like_PAS-A"/>
    <property type="match status" value="1"/>
</dbReference>
<dbReference type="Pfam" id="PF12114">
    <property type="entry name" value="Period_C"/>
    <property type="match status" value="1"/>
</dbReference>
<dbReference type="SMART" id="SM00091">
    <property type="entry name" value="PAS"/>
    <property type="match status" value="2"/>
</dbReference>
<dbReference type="SUPFAM" id="SSF55785">
    <property type="entry name" value="PYP-like sensor domain (PAS domain)"/>
    <property type="match status" value="1"/>
</dbReference>
<dbReference type="PROSITE" id="PS50112">
    <property type="entry name" value="PAS"/>
    <property type="match status" value="1"/>
</dbReference>
<evidence type="ECO:0000250" key="1"/>
<evidence type="ECO:0000250" key="2">
    <source>
        <dbReference type="UniProtKB" id="O35973"/>
    </source>
</evidence>
<evidence type="ECO:0000250" key="3">
    <source>
        <dbReference type="UniProtKB" id="O54943"/>
    </source>
</evidence>
<evidence type="ECO:0000250" key="4">
    <source>
        <dbReference type="UniProtKB" id="Q8CHI5"/>
    </source>
</evidence>
<evidence type="ECO:0000255" key="5"/>
<evidence type="ECO:0000255" key="6">
    <source>
        <dbReference type="PROSITE-ProRule" id="PRU00140"/>
    </source>
</evidence>
<evidence type="ECO:0000256" key="7">
    <source>
        <dbReference type="SAM" id="MobiDB-lite"/>
    </source>
</evidence>
<evidence type="ECO:0000269" key="8">
    <source>
    </source>
</evidence>
<evidence type="ECO:0000269" key="9">
    <source>
    </source>
</evidence>
<evidence type="ECO:0000269" key="10">
    <source>
    </source>
</evidence>
<evidence type="ECO:0000269" key="11">
    <source>
    </source>
</evidence>
<evidence type="ECO:0000269" key="12">
    <source>
    </source>
</evidence>
<evidence type="ECO:0000269" key="13">
    <source>
    </source>
</evidence>
<evidence type="ECO:0000269" key="14">
    <source>
    </source>
</evidence>
<evidence type="ECO:0000269" key="15">
    <source>
    </source>
</evidence>
<evidence type="ECO:0000269" key="16">
    <source>
    </source>
</evidence>
<evidence type="ECO:0000269" key="17">
    <source>
    </source>
</evidence>
<evidence type="ECO:0000269" key="18">
    <source>
    </source>
</evidence>
<evidence type="ECO:0000269" key="19">
    <source>
    </source>
</evidence>
<evidence type="ECO:0000269" key="20">
    <source>
    </source>
</evidence>
<evidence type="ECO:0000269" key="21">
    <source ref="9"/>
</evidence>
<evidence type="ECO:0000303" key="22">
    <source>
    </source>
</evidence>
<evidence type="ECO:0000305" key="23"/>
<evidence type="ECO:0007744" key="24">
    <source>
    </source>
</evidence>
<evidence type="ECO:0007744" key="25">
    <source>
    </source>
</evidence>
<evidence type="ECO:0007744" key="26">
    <source>
    </source>
</evidence>
<evidence type="ECO:0007744" key="27">
    <source>
    </source>
</evidence>
<evidence type="ECO:0007744" key="28">
    <source>
    </source>
</evidence>
<comment type="function">
    <text evidence="14">Transcriptional repressor which forms a core component of the circadian clock. The circadian clock, an internal time-keeping system, regulates various physiological processes through the generation of approximately 24 hour circadian rhythms in gene expression, which are translated into rhythms in metabolism and behavior. It is derived from the Latin roots 'circa' (about) and 'diem' (day) and acts as an important regulator of a wide array of physiological functions including metabolism, sleep, body temperature, blood pressure, endocrine, immune, cardiovascular, and renal function. Consists of two major components: the central clock, residing in the suprachiasmatic nucleus (SCN) of the brain, and the peripheral clocks that are present in nearly every tissue and organ system. Both the central and peripheral clocks can be reset by environmental cues, also known as Zeitgebers (German for 'timegivers'). The predominant Zeitgeber for the central clock is light, which is sensed by retina and signals directly to the SCN. The central clock entrains the peripheral clocks through neuronal and hormonal signals, body temperature and feeding-related cues, aligning all clocks with the external light/dark cycle. Circadian rhythms allow an organism to achieve temporal homeostasis with its environment at the molecular level by regulating gene expression to create a peak of protein expression once every 24 hours to control when a particular physiological process is most active with respect to the solar day. Transcription and translation of core clock components (CLOCK, NPAS2, BMAL1, BMAL2, PER1, PER2, PER3, CRY1 and CRY2) plays a critical role in rhythm generation, whereas delays imposed by post-translational modifications (PTMs) are important for determining the period (tau) of the rhythms (tau refers to the period of a rhythm and is the length, in time, of one complete cycle). A diurnal rhythm is synchronized with the day/night cycle, while the ultradian and infradian rhythms have a period shorter and longer than 24 hours, respectively. Disruptions in the circadian rhythms contribute to the pathology of cardiovascular diseases, cancer, metabolic syndromes and aging. A transcription/translation feedback loop (TTFL) forms the core of the molecular circadian clock mechanism. Transcription factors, CLOCK or NPAS2 and BMAL1 or BMAL2, form the positive limb of the feedback loop, act in the form of a heterodimer and activate the transcription of core clock genes and clock-controlled genes (involved in key metabolic processes), harboring E-box elements (5'-CACGTG-3') within their promoters. The core clock genes: PER1/2/3 and CRY1/2 which are transcriptional repressors form the negative limb of the feedback loop and interact with the CLOCK|NPAS2-BMAL1|BMAL2 heterodimer inhibiting its activity and thereby negatively regulating their own expression. This heterodimer also activates nuclear receptors NR1D1/2 and RORA/B/G, which form a second feedback loop and which activate and repress BMAL1 transcription, respectively. Regulates circadian target genes expression at post-transcriptional levels, but may not be required for the repression at transcriptional level. Controls PER2 protein decay. Represses CRY2 preventing its repression on CLOCK/BMAL1 target genes such as FXYD5 and SCNN1A in kidney and PPARA in liver. Besides its involvement in the maintenance of the circadian clock, has an important function in the regulation of several processes. Participates in the repression of glucocorticoid receptor NR3C1/GR-induced transcriptional activity by reducing the association of NR3C1/GR to glucocorticoid response elements (GREs) by BMAL1:CLOCK. Plays a role in the modulation of the neuroinflammatory state via the regulation of inflammatory mediators release, such as CCL2 and IL6. In spinal astrocytes, negatively regulates the MAPK14/p38 and MAPK8/JNK MAPK cascades as well as the subsequent activation of NFkappaB. Coordinately regulates the expression of multiple genes that are involved in the regulation of renal sodium reabsorption. Can act as gene expression activator in a gene and tissue specific manner, in kidney enhances WNK1 and SLC12A3 expression in collaboration with CLOCK. Modulates hair follicle cycling. Represses the CLOCK-BMAL1 induced transcription of BHLHE40/DEC1.</text>
</comment>
<comment type="subunit">
    <text evidence="2 4 12 16">Homodimer (By similarity). Component of the circadian core oscillator, which includes the CRY proteins, CLOCK or NPAS2, BMAL1 or BMAL2, CSNK1D and/or CSNK1E, TIMELESS, and the PER proteins (By similarity). Interacts directly with TIMELESS, PER2, PER3, CRY1 and CRY2 (By similarity). Interacts with BMAL1 and CLOCK (By similarity). Interacts with GPRASP1 (By similarity). Interacts (phosphorylated) with BTRC and FBXW11; the interactions trigger proteasomal degradation (PubMed:15917222). Interacts with NONO, WDR5 and SFPQ (By similarity). Interacts with USP2 (By similarity). Interacts with HNF4A (PubMed:30530698).</text>
</comment>
<comment type="interaction">
    <interactant intactId="EBI-2557276">
        <id>O15534</id>
    </interactant>
    <interactant intactId="EBI-21535880">
        <id>Q92870-2</id>
        <label>APBB2</label>
    </interactant>
    <organismsDiffer>false</organismsDiffer>
    <experiments>3</experiments>
</comment>
<comment type="interaction">
    <interactant intactId="EBI-2557276">
        <id>O15534</id>
    </interactant>
    <interactant intactId="EBI-10988864">
        <id>P46379-2</id>
        <label>BAG6</label>
    </interactant>
    <organismsDiffer>false</organismsDiffer>
    <experiments>3</experiments>
</comment>
<comment type="interaction">
    <interactant intactId="EBI-2557276">
        <id>O15534</id>
    </interactant>
    <interactant intactId="EBI-2837444">
        <id>Q8WUW1</id>
        <label>BRK1</label>
    </interactant>
    <organismsDiffer>false</organismsDiffer>
    <experiments>3</experiments>
</comment>
<comment type="interaction">
    <interactant intactId="EBI-2557276">
        <id>O15534</id>
    </interactant>
    <interactant intactId="EBI-718729">
        <id>P55212</id>
        <label>CASP6</label>
    </interactant>
    <organismsDiffer>false</organismsDiffer>
    <experiments>3</experiments>
</comment>
<comment type="interaction">
    <interactant intactId="EBI-2557276">
        <id>O15534</id>
    </interactant>
    <interactant intactId="EBI-357046">
        <id>Q99832</id>
        <label>CCT7</label>
    </interactant>
    <organismsDiffer>false</organismsDiffer>
    <experiments>3</experiments>
</comment>
<comment type="interaction">
    <interactant intactId="EBI-2557276">
        <id>O15534</id>
    </interactant>
    <interactant intactId="EBI-741297">
        <id>Q16526</id>
        <label>CRY1</label>
    </interactant>
    <organismsDiffer>false</organismsDiffer>
    <experiments>3</experiments>
</comment>
<comment type="interaction">
    <interactant intactId="EBI-2557276">
        <id>O15534</id>
    </interactant>
    <interactant intactId="EBI-5280572">
        <id>P29692-2</id>
        <label>EEF1D</label>
    </interactant>
    <organismsDiffer>false</organismsDiffer>
    <experiments>3</experiments>
</comment>
<comment type="interaction">
    <interactant intactId="EBI-2557276">
        <id>O15534</id>
    </interactant>
    <interactant intactId="EBI-1054228">
        <id>P41091</id>
        <label>EIF2S3</label>
    </interactant>
    <organismsDiffer>false</organismsDiffer>
    <experiments>3</experiments>
</comment>
<comment type="interaction">
    <interactant intactId="EBI-2557276">
        <id>O15534</id>
    </interactant>
    <interactant intactId="EBI-25852368">
        <id>O75460-2</id>
        <label>ERN1</label>
    </interactant>
    <organismsDiffer>false</organismsDiffer>
    <experiments>3</experiments>
</comment>
<comment type="interaction">
    <interactant intactId="EBI-2557276">
        <id>O15534</id>
    </interactant>
    <interactant intactId="EBI-348399">
        <id>P22607</id>
        <label>FGFR3</label>
    </interactant>
    <organismsDiffer>false</organismsDiffer>
    <experiments>3</experiments>
</comment>
<comment type="interaction">
    <interactant intactId="EBI-2557276">
        <id>O15534</id>
    </interactant>
    <interactant intactId="EBI-10226858">
        <id>Q0VDC6</id>
        <label>FKBP1A</label>
    </interactant>
    <organismsDiffer>false</organismsDiffer>
    <experiments>3</experiments>
</comment>
<comment type="interaction">
    <interactant intactId="EBI-2557276">
        <id>O15534</id>
    </interactant>
    <interactant intactId="EBI-744302">
        <id>P14136</id>
        <label>GFAP</label>
    </interactant>
    <organismsDiffer>false</organismsDiffer>
    <experiments>3</experiments>
</comment>
<comment type="interaction">
    <interactant intactId="EBI-2557276">
        <id>O15534</id>
    </interactant>
    <interactant intactId="EBI-8285963">
        <id>Q14957</id>
        <label>GRIN2C</label>
    </interactant>
    <organismsDiffer>false</organismsDiffer>
    <experiments>3</experiments>
</comment>
<comment type="interaction">
    <interactant intactId="EBI-2557276">
        <id>O15534</id>
    </interactant>
    <interactant intactId="EBI-747754">
        <id>P28799</id>
        <label>GRN</label>
    </interactant>
    <organismsDiffer>false</organismsDiffer>
    <experiments>3</experiments>
</comment>
<comment type="interaction">
    <interactant intactId="EBI-2557276">
        <id>O15534</id>
    </interactant>
    <interactant intactId="EBI-351506">
        <id>P06396</id>
        <label>GSN</label>
    </interactant>
    <organismsDiffer>false</organismsDiffer>
    <experiments>3</experiments>
</comment>
<comment type="interaction">
    <interactant intactId="EBI-2557276">
        <id>O15534</id>
    </interactant>
    <interactant intactId="EBI-350145">
        <id>P01112</id>
        <label>HRAS</label>
    </interactant>
    <organismsDiffer>false</organismsDiffer>
    <experiments>3</experiments>
</comment>
<comment type="interaction">
    <interactant intactId="EBI-2557276">
        <id>O15534</id>
    </interactant>
    <interactant intactId="EBI-356991">
        <id>P54652</id>
        <label>HSPA2</label>
    </interactant>
    <organismsDiffer>false</organismsDiffer>
    <experiments>3</experiments>
</comment>
<comment type="interaction">
    <interactant intactId="EBI-2557276">
        <id>O15534</id>
    </interactant>
    <interactant intactId="EBI-352682">
        <id>P04792</id>
        <label>HSPB1</label>
    </interactant>
    <organismsDiffer>false</organismsDiffer>
    <experiments>3</experiments>
</comment>
<comment type="interaction">
    <interactant intactId="EBI-2557276">
        <id>O15534</id>
    </interactant>
    <interactant intactId="EBI-1055254">
        <id>Q8WXH2</id>
        <label>JPH3</label>
    </interactant>
    <organismsDiffer>false</organismsDiffer>
    <experiments>3</experiments>
</comment>
<comment type="interaction">
    <interactant intactId="EBI-2557276">
        <id>O15534</id>
    </interactant>
    <interactant intactId="EBI-10975473">
        <id>O60333-2</id>
        <label>KIF1B</label>
    </interactant>
    <organismsDiffer>false</organismsDiffer>
    <experiments>3</experiments>
</comment>
<comment type="interaction">
    <interactant intactId="EBI-2557276">
        <id>O15534</id>
    </interactant>
    <interactant intactId="EBI-948266">
        <id>O14901</id>
        <label>KLF11</label>
    </interactant>
    <organismsDiffer>false</organismsDiffer>
    <experiments>3</experiments>
</comment>
<comment type="interaction">
    <interactant intactId="EBI-2557276">
        <id>O15534</id>
    </interactant>
    <interactant intactId="EBI-3908808">
        <id>O60356</id>
        <label>NUPR1</label>
    </interactant>
    <organismsDiffer>false</organismsDiffer>
    <experiments>3</experiments>
</comment>
<comment type="interaction">
    <interactant intactId="EBI-2557276">
        <id>O15534</id>
    </interactant>
    <interactant intactId="EBI-395883">
        <id>P07237</id>
        <label>P4HB</label>
    </interactant>
    <organismsDiffer>false</organismsDiffer>
    <experiments>3</experiments>
</comment>
<comment type="interaction">
    <interactant intactId="EBI-2557276">
        <id>O15534</id>
    </interactant>
    <interactant intactId="EBI-2827813">
        <id>P56645</id>
        <label>PER3</label>
    </interactant>
    <organismsDiffer>false</organismsDiffer>
    <experiments>3</experiments>
</comment>
<comment type="interaction">
    <interactant intactId="EBI-2557276">
        <id>O15534</id>
    </interactant>
    <interactant intactId="EBI-12188331">
        <id>P60201-2</id>
        <label>PLP1</label>
    </interactant>
    <organismsDiffer>false</organismsDiffer>
    <experiments>3</experiments>
</comment>
<comment type="interaction">
    <interactant intactId="EBI-2557276">
        <id>O15534</id>
    </interactant>
    <interactant intactId="EBI-5280197">
        <id>O75400-2</id>
        <label>PRPF40A</label>
    </interactant>
    <organismsDiffer>false</organismsDiffer>
    <experiments>3</experiments>
</comment>
<comment type="interaction">
    <interactant intactId="EBI-2557276">
        <id>O15534</id>
    </interactant>
    <interactant intactId="EBI-749195">
        <id>P60891</id>
        <label>PRPS1</label>
    </interactant>
    <organismsDiffer>false</organismsDiffer>
    <experiments>3</experiments>
</comment>
<comment type="interaction">
    <interactant intactId="EBI-2557276">
        <id>O15534</id>
    </interactant>
    <interactant intactId="EBI-286642">
        <id>P62826</id>
        <label>RAN</label>
    </interactant>
    <organismsDiffer>false</organismsDiffer>
    <experiments>3</experiments>
</comment>
<comment type="interaction">
    <interactant intactId="EBI-2557276">
        <id>O15534</id>
    </interactant>
    <interactant intactId="EBI-1053431">
        <id>P49591</id>
        <label>SARS1</label>
    </interactant>
    <organismsDiffer>false</organismsDiffer>
    <experiments>3</experiments>
</comment>
<comment type="interaction">
    <interactant intactId="EBI-2557276">
        <id>O15534</id>
    </interactant>
    <interactant intactId="EBI-25892254">
        <id>Q9P1I4</id>
        <label>ST13</label>
    </interactant>
    <organismsDiffer>false</organismsDiffer>
    <experiments>3</experiments>
</comment>
<comment type="interaction">
    <interactant intactId="EBI-2557276">
        <id>O15534</id>
    </interactant>
    <interactant intactId="EBI-741480">
        <id>Q9UMX0</id>
        <label>UBQLN1</label>
    </interactant>
    <organismsDiffer>false</organismsDiffer>
    <experiments>3</experiments>
</comment>
<comment type="interaction">
    <interactant intactId="EBI-2557276">
        <id>O15534</id>
    </interactant>
    <interactant intactId="EBI-720609">
        <id>O76024</id>
        <label>WFS1</label>
    </interactant>
    <organismsDiffer>false</organismsDiffer>
    <experiments>3</experiments>
</comment>
<comment type="interaction">
    <interactant intactId="EBI-2557276">
        <id>O15534</id>
    </interactant>
    <interactant intactId="EBI-1266619">
        <id>Q9R194</id>
        <label>Cry2</label>
    </interactant>
    <organismsDiffer>true</organismsDiffer>
    <experiments>3</experiments>
</comment>
<comment type="subcellular location">
    <subcellularLocation>
        <location>Nucleus</location>
    </subcellularLocation>
    <subcellularLocation>
        <location>Cytoplasm</location>
    </subcellularLocation>
    <text evidence="1">Nucleocytoplasmic shuttling is effected by interaction with other circadian core oscillator proteins and/or by phosphorylation. Retention of PER1 in the cytoplasm occurs through PER1-PER2 heterodimer formation. Translocate to the nucleus after phosphorylation by CSNK1D or CSNK1E. Also translocated to the nucleus by CRY1 or CRY2 (By similarity).</text>
</comment>
<comment type="alternative products">
    <event type="alternative splicing"/>
    <isoform>
        <id>O15534-1</id>
        <name>Rigui 4.7</name>
        <sequence type="displayed"/>
    </isoform>
    <isoform>
        <id>O15534-2</id>
        <name>Rigui 3.0</name>
        <sequence type="not described"/>
    </isoform>
    <isoform>
        <id>O15534-3</id>
        <name>Rigui 6.6</name>
        <name>Truncated</name>
        <sequence type="not described"/>
    </isoform>
    <isoform>
        <id>O15534-4</id>
        <name>2</name>
        <sequence type="described" ref="VSP_056205 VSP_056206 VSP_056207"/>
    </isoform>
    <text>Additional isoforms seem to exist.</text>
</comment>
<comment type="tissue specificity">
    <text evidence="10 14 18 19">Widely expressed. Expressed in hair follicles (at protein level). Found in heart, brain, placenta, lung, liver, skeletal muscle, pancreas, kidney, spleen, thymus, prostate, testis, ovary and small intestine. Highest level in skeletal muscle.</text>
</comment>
<comment type="induction">
    <text evidence="10">Serum-induced levels in fibroblasts show circadian oscillations. Maximum levels after 1 hour stimulation, minimum levels after 12 hours. Another peak is then observed after 20 hours. Protein levels show maximum levels at 6 hours, decrease to reach minimum levels at 20 hours, and increase again to reach a second peak after 26 hours. Levels then decrease slightly and then increase to maximum levels at 32 hours. Levels of phosphorylated form increase between 3 hours and 12 hours.</text>
</comment>
<comment type="PTM">
    <text evidence="12">Phosphorylated on serine residues by CSNK1D, CSNK1E and probably also by CSNK1G2. Phosphorylation by CSNK1D or CSNK1E promotes nuclear location of PER proteins as well as ubiquitination and subsequent degradation. May be dephosphorylated by PP1.</text>
</comment>
<comment type="PTM">
    <text evidence="2 12">Ubiquitinated; requires phosphorylation by CSNK1E and interaction with BTRC and FBXW11. Deubiquitinated by USP2 (By similarity).</text>
</comment>
<comment type="sequence caution" evidence="23">
    <conflict type="erroneous initiation">
        <sequence resource="EMBL-CDS" id="BAC06326"/>
    </conflict>
    <text>Extended N-terminus.</text>
</comment>
<proteinExistence type="evidence at protein level"/>
<reference key="1">
    <citation type="journal article" date="1997" name="Cell">
        <title>Rigui, a putative mammalian ortholog of the Drosophila period gene.</title>
        <authorList>
            <person name="Sun Z.S."/>
            <person name="Albrecht U."/>
            <person name="Zhuchenko O."/>
            <person name="Bailey J."/>
            <person name="Eichele G."/>
            <person name="Lee C.C."/>
        </authorList>
    </citation>
    <scope>NUCLEOTIDE SEQUENCE [MRNA]</scope>
    <scope>ALTERNATIVE SPLICING</scope>
    <scope>VARIANT PRO-962</scope>
    <source>
        <tissue>Heart</tissue>
    </source>
</reference>
<reference key="2">
    <citation type="journal article" date="1997" name="Nature">
        <title>Circadian oscillation of a mammalian homologue of the Drosophila period gene.</title>
        <authorList>
            <person name="Tei H."/>
            <person name="Okamura H."/>
            <person name="Shigeyoshi Y."/>
            <person name="Fukuhara C."/>
            <person name="Ozawa R."/>
            <person name="Hirose M."/>
            <person name="Sakaki Y."/>
        </authorList>
    </citation>
    <scope>NUCLEOTIDE SEQUENCE [MRNA]</scope>
    <scope>TISSUE SPECIFICITY</scope>
    <scope>VARIANT PRO-962</scope>
    <source>
        <tissue>Brain</tissue>
    </source>
</reference>
<reference key="3">
    <citation type="journal article" date="2000" name="Gene">
        <title>The human Per1 gene: genomic organization and promoter analysis of the first human orthologue of the Drosophila period gene.</title>
        <authorList>
            <person name="Taruscio D."/>
            <person name="Zoraqi G.K."/>
            <person name="Falchi M."/>
            <person name="Iosi F."/>
            <person name="Paradisi S."/>
            <person name="Di Fiore B."/>
            <person name="Lavia P."/>
            <person name="Falbo V."/>
        </authorList>
    </citation>
    <scope>NUCLEOTIDE SEQUENCE [GENOMIC DNA]</scope>
    <scope>VARIANT PRO-962</scope>
</reference>
<reference key="4">
    <citation type="journal article" date="2000" name="Genomics">
        <title>The human and mouse Period1 genes: five well-conserved E-boxes additively contribute to the enhancement of mPer1 transcription.</title>
        <authorList>
            <person name="Hida A."/>
            <person name="Koike N."/>
            <person name="Hirose M."/>
            <person name="Hattori M."/>
            <person name="Sakaki Y."/>
            <person name="Tei H."/>
        </authorList>
    </citation>
    <scope>NUCLEOTIDE SEQUENCE [GENOMIC DNA]</scope>
    <scope>VARIANT PRO-962</scope>
</reference>
<reference key="5">
    <citation type="journal article" date="1997" name="DNA Res.">
        <title>Characterization of cDNA clones in size-fractionated cDNA libraries from human brain.</title>
        <authorList>
            <person name="Seki N."/>
            <person name="Ohira M."/>
            <person name="Nagase T."/>
            <person name="Ishikawa K."/>
            <person name="Miyajima N."/>
            <person name="Nakajima D."/>
            <person name="Nomura N."/>
            <person name="Ohara O."/>
        </authorList>
    </citation>
    <scope>NUCLEOTIDE SEQUENCE [LARGE SCALE MRNA]</scope>
    <scope>VARIANT PRO-962</scope>
    <source>
        <tissue>Brain</tissue>
    </source>
</reference>
<reference key="6">
    <citation type="submission" date="2002-07" db="EMBL/GenBank/DDBJ databases">
        <authorList>
            <person name="Nagase T."/>
            <person name="Kikuno R."/>
            <person name="Ohara O."/>
        </authorList>
    </citation>
    <scope>SEQUENCE REVISION</scope>
</reference>
<reference key="7">
    <citation type="journal article" date="2004" name="Nat. Genet.">
        <title>Complete sequencing and characterization of 21,243 full-length human cDNAs.</title>
        <authorList>
            <person name="Ota T."/>
            <person name="Suzuki Y."/>
            <person name="Nishikawa T."/>
            <person name="Otsuki T."/>
            <person name="Sugiyama T."/>
            <person name="Irie R."/>
            <person name="Wakamatsu A."/>
            <person name="Hayashi K."/>
            <person name="Sato H."/>
            <person name="Nagai K."/>
            <person name="Kimura K."/>
            <person name="Makita H."/>
            <person name="Sekine M."/>
            <person name="Obayashi M."/>
            <person name="Nishi T."/>
            <person name="Shibahara T."/>
            <person name="Tanaka T."/>
            <person name="Ishii S."/>
            <person name="Yamamoto J."/>
            <person name="Saito K."/>
            <person name="Kawai Y."/>
            <person name="Isono Y."/>
            <person name="Nakamura Y."/>
            <person name="Nagahari K."/>
            <person name="Murakami K."/>
            <person name="Yasuda T."/>
            <person name="Iwayanagi T."/>
            <person name="Wagatsuma M."/>
            <person name="Shiratori A."/>
            <person name="Sudo H."/>
            <person name="Hosoiri T."/>
            <person name="Kaku Y."/>
            <person name="Kodaira H."/>
            <person name="Kondo H."/>
            <person name="Sugawara M."/>
            <person name="Takahashi M."/>
            <person name="Kanda K."/>
            <person name="Yokoi T."/>
            <person name="Furuya T."/>
            <person name="Kikkawa E."/>
            <person name="Omura Y."/>
            <person name="Abe K."/>
            <person name="Kamihara K."/>
            <person name="Katsuta N."/>
            <person name="Sato K."/>
            <person name="Tanikawa M."/>
            <person name="Yamazaki M."/>
            <person name="Ninomiya K."/>
            <person name="Ishibashi T."/>
            <person name="Yamashita H."/>
            <person name="Murakawa K."/>
            <person name="Fujimori K."/>
            <person name="Tanai H."/>
            <person name="Kimata M."/>
            <person name="Watanabe M."/>
            <person name="Hiraoka S."/>
            <person name="Chiba Y."/>
            <person name="Ishida S."/>
            <person name="Ono Y."/>
            <person name="Takiguchi S."/>
            <person name="Watanabe S."/>
            <person name="Yosida M."/>
            <person name="Hotuta T."/>
            <person name="Kusano J."/>
            <person name="Kanehori K."/>
            <person name="Takahashi-Fujii A."/>
            <person name="Hara H."/>
            <person name="Tanase T.-O."/>
            <person name="Nomura Y."/>
            <person name="Togiya S."/>
            <person name="Komai F."/>
            <person name="Hara R."/>
            <person name="Takeuchi K."/>
            <person name="Arita M."/>
            <person name="Imose N."/>
            <person name="Musashino K."/>
            <person name="Yuuki H."/>
            <person name="Oshima A."/>
            <person name="Sasaki N."/>
            <person name="Aotsuka S."/>
            <person name="Yoshikawa Y."/>
            <person name="Matsunawa H."/>
            <person name="Ichihara T."/>
            <person name="Shiohata N."/>
            <person name="Sano S."/>
            <person name="Moriya S."/>
            <person name="Momiyama H."/>
            <person name="Satoh N."/>
            <person name="Takami S."/>
            <person name="Terashima Y."/>
            <person name="Suzuki O."/>
            <person name="Nakagawa S."/>
            <person name="Senoh A."/>
            <person name="Mizoguchi H."/>
            <person name="Goto Y."/>
            <person name="Shimizu F."/>
            <person name="Wakebe H."/>
            <person name="Hishigaki H."/>
            <person name="Watanabe T."/>
            <person name="Sugiyama A."/>
            <person name="Takemoto M."/>
            <person name="Kawakami B."/>
            <person name="Yamazaki M."/>
            <person name="Watanabe K."/>
            <person name="Kumagai A."/>
            <person name="Itakura S."/>
            <person name="Fukuzumi Y."/>
            <person name="Fujimori Y."/>
            <person name="Komiyama M."/>
            <person name="Tashiro H."/>
            <person name="Tanigami A."/>
            <person name="Fujiwara T."/>
            <person name="Ono T."/>
            <person name="Yamada K."/>
            <person name="Fujii Y."/>
            <person name="Ozaki K."/>
            <person name="Hirao M."/>
            <person name="Ohmori Y."/>
            <person name="Kawabata A."/>
            <person name="Hikiji T."/>
            <person name="Kobatake N."/>
            <person name="Inagaki H."/>
            <person name="Ikema Y."/>
            <person name="Okamoto S."/>
            <person name="Okitani R."/>
            <person name="Kawakami T."/>
            <person name="Noguchi S."/>
            <person name="Itoh T."/>
            <person name="Shigeta K."/>
            <person name="Senba T."/>
            <person name="Matsumura K."/>
            <person name="Nakajima Y."/>
            <person name="Mizuno T."/>
            <person name="Morinaga M."/>
            <person name="Sasaki M."/>
            <person name="Togashi T."/>
            <person name="Oyama M."/>
            <person name="Hata H."/>
            <person name="Watanabe M."/>
            <person name="Komatsu T."/>
            <person name="Mizushima-Sugano J."/>
            <person name="Satoh T."/>
            <person name="Shirai Y."/>
            <person name="Takahashi Y."/>
            <person name="Nakagawa K."/>
            <person name="Okumura K."/>
            <person name="Nagase T."/>
            <person name="Nomura N."/>
            <person name="Kikuchi H."/>
            <person name="Masuho Y."/>
            <person name="Yamashita R."/>
            <person name="Nakai K."/>
            <person name="Yada T."/>
            <person name="Nakamura Y."/>
            <person name="Ohara O."/>
            <person name="Isogai T."/>
            <person name="Sugano S."/>
        </authorList>
    </citation>
    <scope>NUCLEOTIDE SEQUENCE [LARGE SCALE MRNA] (ISOFORM 2)</scope>
    <source>
        <tissue>Corpus callosum</tissue>
    </source>
</reference>
<reference key="8">
    <citation type="journal article" date="2006" name="Nature">
        <title>DNA sequence of human chromosome 17 and analysis of rearrangement in the human lineage.</title>
        <authorList>
            <person name="Zody M.C."/>
            <person name="Garber M."/>
            <person name="Adams D.J."/>
            <person name="Sharpe T."/>
            <person name="Harrow J."/>
            <person name="Lupski J.R."/>
            <person name="Nicholson C."/>
            <person name="Searle S.M."/>
            <person name="Wilming L."/>
            <person name="Young S.K."/>
            <person name="Abouelleil A."/>
            <person name="Allen N.R."/>
            <person name="Bi W."/>
            <person name="Bloom T."/>
            <person name="Borowsky M.L."/>
            <person name="Bugalter B.E."/>
            <person name="Butler J."/>
            <person name="Chang J.L."/>
            <person name="Chen C.-K."/>
            <person name="Cook A."/>
            <person name="Corum B."/>
            <person name="Cuomo C.A."/>
            <person name="de Jong P.J."/>
            <person name="DeCaprio D."/>
            <person name="Dewar K."/>
            <person name="FitzGerald M."/>
            <person name="Gilbert J."/>
            <person name="Gibson R."/>
            <person name="Gnerre S."/>
            <person name="Goldstein S."/>
            <person name="Grafham D.V."/>
            <person name="Grocock R."/>
            <person name="Hafez N."/>
            <person name="Hagopian D.S."/>
            <person name="Hart E."/>
            <person name="Norman C.H."/>
            <person name="Humphray S."/>
            <person name="Jaffe D.B."/>
            <person name="Jones M."/>
            <person name="Kamal M."/>
            <person name="Khodiyar V.K."/>
            <person name="LaButti K."/>
            <person name="Laird G."/>
            <person name="Lehoczky J."/>
            <person name="Liu X."/>
            <person name="Lokyitsang T."/>
            <person name="Loveland J."/>
            <person name="Lui A."/>
            <person name="Macdonald P."/>
            <person name="Major J.E."/>
            <person name="Matthews L."/>
            <person name="Mauceli E."/>
            <person name="McCarroll S.A."/>
            <person name="Mihalev A.H."/>
            <person name="Mudge J."/>
            <person name="Nguyen C."/>
            <person name="Nicol R."/>
            <person name="O'Leary S.B."/>
            <person name="Osoegawa K."/>
            <person name="Schwartz D.C."/>
            <person name="Shaw-Smith C."/>
            <person name="Stankiewicz P."/>
            <person name="Steward C."/>
            <person name="Swarbreck D."/>
            <person name="Venkataraman V."/>
            <person name="Whittaker C.A."/>
            <person name="Yang X."/>
            <person name="Zimmer A.R."/>
            <person name="Bradley A."/>
            <person name="Hubbard T."/>
            <person name="Birren B.W."/>
            <person name="Rogers J."/>
            <person name="Lander E.S."/>
            <person name="Nusbaum C."/>
        </authorList>
    </citation>
    <scope>NUCLEOTIDE SEQUENCE [LARGE SCALE GENOMIC DNA]</scope>
</reference>
<reference key="9">
    <citation type="submission" date="2005-09" db="EMBL/GenBank/DDBJ databases">
        <authorList>
            <person name="Mural R.J."/>
            <person name="Istrail S."/>
            <person name="Sutton G.G."/>
            <person name="Florea L."/>
            <person name="Halpern A.L."/>
            <person name="Mobarry C.M."/>
            <person name="Lippert R."/>
            <person name="Walenz B."/>
            <person name="Shatkay H."/>
            <person name="Dew I."/>
            <person name="Miller J.R."/>
            <person name="Flanigan M.J."/>
            <person name="Edwards N.J."/>
            <person name="Bolanos R."/>
            <person name="Fasulo D."/>
            <person name="Halldorsson B.V."/>
            <person name="Hannenhalli S."/>
            <person name="Turner R."/>
            <person name="Yooseph S."/>
            <person name="Lu F."/>
            <person name="Nusskern D.R."/>
            <person name="Shue B.C."/>
            <person name="Zheng X.H."/>
            <person name="Zhong F."/>
            <person name="Delcher A.L."/>
            <person name="Huson D.H."/>
            <person name="Kravitz S.A."/>
            <person name="Mouchard L."/>
            <person name="Reinert K."/>
            <person name="Remington K.A."/>
            <person name="Clark A.G."/>
            <person name="Waterman M.S."/>
            <person name="Eichler E.E."/>
            <person name="Adams M.D."/>
            <person name="Hunkapiller M.W."/>
            <person name="Myers E.W."/>
            <person name="Venter J.C."/>
        </authorList>
    </citation>
    <scope>NUCLEOTIDE SEQUENCE [LARGE SCALE GENOMIC DNA]</scope>
    <scope>VARIANT PRO-962</scope>
</reference>
<reference key="10">
    <citation type="journal article" date="2004" name="Genome Res.">
        <title>The status, quality, and expansion of the NIH full-length cDNA project: the Mammalian Gene Collection (MGC).</title>
        <authorList>
            <consortium name="The MGC Project Team"/>
        </authorList>
    </citation>
    <scope>NUCLEOTIDE SEQUENCE [LARGE SCALE MRNA]</scope>
    <scope>VARIANT PRO-962</scope>
</reference>
<reference key="11">
    <citation type="journal article" date="1997" name="Neuron">
        <title>Two period homologs: circadian expression and photic regulation in the suprachiasmatic nuclei.</title>
        <authorList>
            <person name="Shearman L.P."/>
            <person name="Zylka M.J."/>
            <person name="Weaver D.R."/>
            <person name="Kolakowski L.F. Jr."/>
            <person name="Reppert S.M."/>
        </authorList>
    </citation>
    <scope>TISSUE SPECIFICITY</scope>
</reference>
<reference key="12">
    <citation type="journal article" date="2000" name="NeuroReport">
        <title>Phosphorylation and destabilization of human period I clock protein by human casein kinase I epsilon.</title>
        <authorList>
            <person name="Keesler G.A."/>
            <person name="Camacho F."/>
            <person name="Guo Y."/>
            <person name="Virshup D."/>
            <person name="Mondadori C."/>
            <person name="Yao Z."/>
        </authorList>
    </citation>
    <scope>PHOSPHORYLATION BY CSNK1E</scope>
</reference>
<reference key="13">
    <citation type="journal article" date="2001" name="FEBS Lett.">
        <title>Human casein kinase Idelta phosphorylation of human circadian clock proteins period 1 and 2.</title>
        <authorList>
            <person name="Camacho F."/>
            <person name="Cilio M."/>
            <person name="Guo Y."/>
            <person name="Virshup D.M."/>
            <person name="Patel K."/>
            <person name="Khorkova O."/>
            <person name="Styren S."/>
            <person name="Morse B."/>
            <person name="Yao Z."/>
            <person name="Keesler G.A."/>
        </authorList>
    </citation>
    <scope>PHOSPHORYLATION BY CSNK1D</scope>
</reference>
<reference key="14">
    <citation type="journal article" date="2004" name="Biochem. J.">
        <title>Phosphorylation of clock protein PER1 regulates its circadian degradation in normal human fibroblasts.</title>
        <authorList>
            <person name="Miyazaki K."/>
            <person name="Nagase T."/>
            <person name="Mesaki M."/>
            <person name="Narukawa J."/>
            <person name="Ohara O."/>
            <person name="Ishida N."/>
        </authorList>
    </citation>
    <scope>PHOSPHORYLATION</scope>
    <scope>TISSUE SPECIFICITY</scope>
    <scope>SUBCELLULAR LOCATION</scope>
    <scope>INDUCTION</scope>
</reference>
<reference key="15">
    <citation type="journal article" date="2005" name="J. Biol. Chem.">
        <title>SCFbeta-TRCP controls clock-dependent transcription via casein kinase 1-dependent degradation of the mammalian period-1 (Per1) protein.</title>
        <authorList>
            <person name="Shirogane T."/>
            <person name="Jin J."/>
            <person name="Ang X.L."/>
            <person name="Harper J.W."/>
        </authorList>
    </citation>
    <scope>INTERACTION WITH BTRC AND FBXW11</scope>
    <scope>PHOSPHORYLATION AT THR-121; SER-122 AND SER-126</scope>
    <scope>UBIQUITINATION</scope>
    <scope>MUTAGENESIS OF 210-SER--THR-213; 714-SER--SER-726 AND 794-PHE--PHE-798</scope>
</reference>
<reference key="16">
    <citation type="journal article" date="2006" name="Cell">
        <title>Global, in vivo, and site-specific phosphorylation dynamics in signaling networks.</title>
        <authorList>
            <person name="Olsen J.V."/>
            <person name="Blagoev B."/>
            <person name="Gnad F."/>
            <person name="Macek B."/>
            <person name="Kumar C."/>
            <person name="Mortensen P."/>
            <person name="Mann M."/>
        </authorList>
    </citation>
    <scope>PHOSPHORYLATION [LARGE SCALE ANALYSIS] AT SER-979 AND SER-980</scope>
    <scope>IDENTIFICATION BY MASS SPECTROMETRY [LARGE SCALE ANALYSIS]</scope>
    <source>
        <tissue>Cervix carcinoma</tissue>
    </source>
</reference>
<reference key="17">
    <citation type="journal article" date="2007" name="Science">
        <title>ATM and ATR substrate analysis reveals extensive protein networks responsive to DNA damage.</title>
        <authorList>
            <person name="Matsuoka S."/>
            <person name="Ballif B.A."/>
            <person name="Smogorzewska A."/>
            <person name="McDonald E.R. III"/>
            <person name="Hurov K.E."/>
            <person name="Luo J."/>
            <person name="Bakalarski C.E."/>
            <person name="Zhao Z."/>
            <person name="Solimini N."/>
            <person name="Lerenthal Y."/>
            <person name="Shiloh Y."/>
            <person name="Gygi S.P."/>
            <person name="Elledge S.J."/>
        </authorList>
    </citation>
    <scope>IDENTIFICATION BY MASS SPECTROMETRY [LARGE SCALE ANALYSIS]</scope>
    <source>
        <tissue>Embryonic kidney</tissue>
    </source>
</reference>
<reference key="18">
    <citation type="journal article" date="2008" name="Proc. Natl. Acad. Sci. U.S.A.">
        <title>A quantitative atlas of mitotic phosphorylation.</title>
        <authorList>
            <person name="Dephoure N."/>
            <person name="Zhou C."/>
            <person name="Villen J."/>
            <person name="Beausoleil S.A."/>
            <person name="Bakalarski C.E."/>
            <person name="Elledge S.J."/>
            <person name="Gygi S.P."/>
        </authorList>
    </citation>
    <scope>PHOSPHORYLATION [LARGE SCALE ANALYSIS] AT SER-704 AND SER-815</scope>
    <scope>IDENTIFICATION BY MASS SPECTROMETRY [LARGE SCALE ANALYSIS]</scope>
    <source>
        <tissue>Cervix carcinoma</tissue>
    </source>
</reference>
<reference key="19">
    <citation type="journal article" date="2009" name="Anal. Chem.">
        <title>Lys-N and trypsin cover complementary parts of the phosphoproteome in a refined SCX-based approach.</title>
        <authorList>
            <person name="Gauci S."/>
            <person name="Helbig A.O."/>
            <person name="Slijper M."/>
            <person name="Krijgsveld J."/>
            <person name="Heck A.J."/>
            <person name="Mohammed S."/>
        </authorList>
    </citation>
    <scope>IDENTIFICATION BY MASS SPECTROMETRY [LARGE SCALE ANALYSIS]</scope>
</reference>
<reference key="20">
    <citation type="journal article" date="2009" name="Sci. Signal.">
        <title>Quantitative phosphoproteomic analysis of T cell receptor signaling reveals system-wide modulation of protein-protein interactions.</title>
        <authorList>
            <person name="Mayya V."/>
            <person name="Lundgren D.H."/>
            <person name="Hwang S.-I."/>
            <person name="Rezaul K."/>
            <person name="Wu L."/>
            <person name="Eng J.K."/>
            <person name="Rodionov V."/>
            <person name="Han D.K."/>
        </authorList>
    </citation>
    <scope>PHOSPHORYLATION [LARGE SCALE ANALYSIS] AT SER-815</scope>
    <scope>IDENTIFICATION BY MASS SPECTROMETRY [LARGE SCALE ANALYSIS]</scope>
    <source>
        <tissue>Leukemic T-cell</tissue>
    </source>
</reference>
<reference key="21">
    <citation type="journal article" date="2010" name="Sci. Signal.">
        <title>Quantitative phosphoproteomics reveals widespread full phosphorylation site occupancy during mitosis.</title>
        <authorList>
            <person name="Olsen J.V."/>
            <person name="Vermeulen M."/>
            <person name="Santamaria A."/>
            <person name="Kumar C."/>
            <person name="Miller M.L."/>
            <person name="Jensen L.J."/>
            <person name="Gnad F."/>
            <person name="Cox J."/>
            <person name="Jensen T.S."/>
            <person name="Nigg E.A."/>
            <person name="Brunak S."/>
            <person name="Mann M."/>
        </authorList>
    </citation>
    <scope>PHOSPHORYLATION [LARGE SCALE ANALYSIS] AT SER-704</scope>
    <scope>IDENTIFICATION BY MASS SPECTROMETRY [LARGE SCALE ANALYSIS]</scope>
    <source>
        <tissue>Cervix carcinoma</tissue>
    </source>
</reference>
<reference key="22">
    <citation type="journal article" date="2013" name="J. Proteome Res.">
        <title>Toward a comprehensive characterization of a human cancer cell phosphoproteome.</title>
        <authorList>
            <person name="Zhou H."/>
            <person name="Di Palma S."/>
            <person name="Preisinger C."/>
            <person name="Peng M."/>
            <person name="Polat A.N."/>
            <person name="Heck A.J."/>
            <person name="Mohammed S."/>
        </authorList>
    </citation>
    <scope>PHOSPHORYLATION [LARGE SCALE ANALYSIS] AT SER-704 AND SER-815</scope>
    <scope>IDENTIFICATION BY MASS SPECTROMETRY [LARGE SCALE ANALYSIS]</scope>
    <source>
        <tissue>Cervix carcinoma</tissue>
        <tissue>Erythroleukemia</tissue>
    </source>
</reference>
<reference key="23">
    <citation type="journal article" date="2013" name="Physiol. Rev.">
        <title>Metabolism and the circadian clock converge.</title>
        <authorList>
            <person name="Eckel-Mahan K."/>
            <person name="Sassone-Corsi P."/>
        </authorList>
    </citation>
    <scope>REVIEW</scope>
</reference>
<reference key="24">
    <citation type="journal article" date="2014" name="J. Invest. Dermatol.">
        <title>A meeting of two chronobiological systems: circadian proteins Period1 and BMAL1 modulate the human hair cycle clock.</title>
        <authorList>
            <person name="Al-Nuaimi Y."/>
            <person name="Hardman J.A."/>
            <person name="Biro T."/>
            <person name="Haslam I.S."/>
            <person name="Philpott M.P."/>
            <person name="Toth B.I."/>
            <person name="Farjo N."/>
            <person name="Farjo B."/>
            <person name="Baier G."/>
            <person name="Watson R.E."/>
            <person name="Grimaldi B."/>
            <person name="Kloepper J.E."/>
            <person name="Paus R."/>
        </authorList>
    </citation>
    <scope>FUNCTION IN HAIR GROWTH</scope>
    <scope>SUBCELLULAR LOCATION</scope>
    <scope>TISSUE SPECIFICITY</scope>
</reference>
<reference key="25">
    <citation type="journal article" date="2014" name="Trends Cell Biol.">
        <title>Molecular architecture of the mammalian circadian clock.</title>
        <authorList>
            <person name="Partch C.L."/>
            <person name="Green C.B."/>
            <person name="Takahashi J.S."/>
        </authorList>
    </citation>
    <scope>REVIEW</scope>
</reference>
<reference key="26">
    <citation type="journal article" date="2018" name="Proc. Natl. Acad. Sci. U.S.A.">
        <title>Nuclear receptor HNF4A transrepresses CLOCK:BMAL1 and modulates tissue-specific circadian networks.</title>
        <authorList>
            <person name="Qu M."/>
            <person name="Duffy T."/>
            <person name="Hirota T."/>
            <person name="Kay S.A."/>
        </authorList>
    </citation>
    <scope>INTERACTION WITH HNF4A</scope>
</reference>
<reference key="27">
    <citation type="journal article" date="2006" name="Science">
        <title>The consensus coding sequences of human breast and colorectal cancers.</title>
        <authorList>
            <person name="Sjoeblom T."/>
            <person name="Jones S."/>
            <person name="Wood L.D."/>
            <person name="Parsons D.W."/>
            <person name="Lin J."/>
            <person name="Barber T.D."/>
            <person name="Mandelker D."/>
            <person name="Leary R.J."/>
            <person name="Ptak J."/>
            <person name="Silliman N."/>
            <person name="Szabo S."/>
            <person name="Buckhaults P."/>
            <person name="Farrell C."/>
            <person name="Meeh P."/>
            <person name="Markowitz S.D."/>
            <person name="Willis J."/>
            <person name="Dawson D."/>
            <person name="Willson J.K.V."/>
            <person name="Gazdar A.F."/>
            <person name="Hartigan J."/>
            <person name="Wu L."/>
            <person name="Liu C."/>
            <person name="Parmigiani G."/>
            <person name="Park B.H."/>
            <person name="Bachman K.E."/>
            <person name="Papadopoulos N."/>
            <person name="Vogelstein B."/>
            <person name="Kinzler K.W."/>
            <person name="Velculescu V.E."/>
        </authorList>
    </citation>
    <scope>VARIANTS [LARGE SCALE ANALYSIS] GLN-696; SER-985 AND LEU-1060</scope>
</reference>
<reference key="28">
    <citation type="journal article" date="2017" name="J. Stroke Cerebrovasc. Dis.">
        <title>Exome sequencing identified CCER2 as a novel candidate gene for Moyamoya disease.</title>
        <authorList>
            <person name="Mukawa M."/>
            <person name="Nariai T."/>
            <person name="Onda H."/>
            <person name="Yoneyama T."/>
            <person name="Aihara Y."/>
            <person name="Hirota K."/>
            <person name="Kudo T."/>
            <person name="Sumita K."/>
            <person name="Maehara T."/>
            <person name="Kawamata T."/>
            <person name="Kasuya H."/>
            <person name="Akagawa H."/>
        </authorList>
    </citation>
    <scope>VARIANT GLN-422</scope>
</reference>
<sequence>MSGPLEGADGGGDPRPGESFCPGGVPSPGPPQHRPCPGPSLADDTDANSNGSSGNESNGHESRGASQRSSHSSSSGNGKDSALLETTESSKSTNSQSPSPPSSSIAYSLLSASSEQDNPSTSGCSSEQSARARTQKELMTALRELKLRLPPERRGKGRSGTLATLQYALACVKQVQANQEYYQQWSLEEGEPCSMDMSTYTLEELEHITSEYTLQNQDTFSVAVSFLTGRIVYISEQAAVLLRCKRDVFRGTRFSELLAPQDVGVFYGSTAPSRLPTWGTGASAGSGLRDFTQEKSVFCRIRGGPDRDPGPRYQPFRLTPYVTKIRVSDGAPAQPCCLLIAERIHSGYEAPRIPPDKRIFTTRHTPSCLFQDVDERAAPLLGYLPQDLLGAPVLLFLHPEDRPLMLAIHKKILQLAGQPFDHSPIRFCARNGEYVTMDTSWAGFVHPWSRKVAFVLGRHKVRTAPLNEDVFTPPAPSPAPSLDTDIQELSEQIHRLLLQPVHSPSPTGLCGVGAVTSPGPLHSPGSSSDSNGGDAEGPGPPAPVTFQQICKDVHLVKHQGQQLFIESRARPQSRPRLPATGTFKAKALPCQSPDPELEAGSAPVQAPLALVPEEAERKEASSCSYQQINCLDSILRYLESCNLPSTTKRKCASSSSYTTSSASDDDRQRTGPVSVGTKKDPPSAALSGEGATPRKEPVVGGTLSPLALANKAESVVSVTSQCSFSSTIVHVGDKKPPESDIIMMEDLPGLAPGPAPSPAPSPTVAPDPAPDAYRPVGLTKAVLSLHTQKEEQAFLSRFRDLGRLRGLDSSSTAPSALGERGCHHGPAPPSRRHHCRSKAKRSRHHQNPRAEAPCYVSHPSPVPPSTPWPTPPATTPFPAVVQPYPLPVFSPRGGPQPLPPAPTSVPPAAFPAPLVTPMVALVLPNYLFPTPSSYPYGALQTPAEGPPTPASHSPSPSLPALAPSPPHRPDSPLFNSRCSSPLQLNLLQLEELPRAEGAAVAGGPGSSAGPPPPSAEAAEPEARLAEVTESSNQDALSGSSDLLELLLQEDSRSGTGSAASGSLGSGLGSGSGSGSHEGGSTSASITRSSQSSHTSKYFGSIDSSEAEAGAARGGAEPGDQVIKYVLQDPIWLLMANADQRVMMTYQVPSRDMTSVLKQDRERLRAMQKQQPRFSEDQRRELGAVHSWVRKGQLPRALDVMACVDCGSSTQDPGHPDDPLFSELDGLGLEPMEEGGGEQGSSGGGSGEGEGCEEAQGGAKASSSQDLAMEEEEEGRSSSSPALPTAGNCTS</sequence>